<dbReference type="EC" id="4.4.1.22" evidence="1"/>
<dbReference type="EMBL" id="CP000050">
    <property type="protein sequence ID" value="AAY47854.1"/>
    <property type="molecule type" value="Genomic_DNA"/>
</dbReference>
<dbReference type="RefSeq" id="WP_011038486.1">
    <property type="nucleotide sequence ID" value="NZ_CP155948.1"/>
</dbReference>
<dbReference type="SMR" id="Q4UYL9"/>
<dbReference type="KEGG" id="xcb:XC_0776"/>
<dbReference type="HOGENOM" id="CLU_090716_0_0_6"/>
<dbReference type="UniPathway" id="UPA00562">
    <property type="reaction ID" value="UER00621"/>
</dbReference>
<dbReference type="Proteomes" id="UP000000420">
    <property type="component" value="Chromosome"/>
</dbReference>
<dbReference type="GO" id="GO:0051907">
    <property type="term" value="F:S-(hydroxymethyl)glutathione synthase activity"/>
    <property type="evidence" value="ECO:0007669"/>
    <property type="project" value="UniProtKB-UniRule"/>
</dbReference>
<dbReference type="GO" id="GO:0008270">
    <property type="term" value="F:zinc ion binding"/>
    <property type="evidence" value="ECO:0007669"/>
    <property type="project" value="UniProtKB-UniRule"/>
</dbReference>
<dbReference type="GO" id="GO:0046294">
    <property type="term" value="P:formaldehyde catabolic process"/>
    <property type="evidence" value="ECO:0007669"/>
    <property type="project" value="UniProtKB-UniRule"/>
</dbReference>
<dbReference type="Gene3D" id="3.90.1590.10">
    <property type="entry name" value="glutathione-dependent formaldehyde- activating enzyme (gfa)"/>
    <property type="match status" value="1"/>
</dbReference>
<dbReference type="HAMAP" id="MF_00723">
    <property type="entry name" value="Formald_GSH"/>
    <property type="match status" value="1"/>
</dbReference>
<dbReference type="InterPro" id="IPR006913">
    <property type="entry name" value="CENP-V/GFA"/>
</dbReference>
<dbReference type="InterPro" id="IPR014185">
    <property type="entry name" value="Formald_GSH"/>
</dbReference>
<dbReference type="InterPro" id="IPR011057">
    <property type="entry name" value="Mss4-like_sf"/>
</dbReference>
<dbReference type="NCBIfam" id="TIGR02820">
    <property type="entry name" value="formald_GSH"/>
    <property type="match status" value="1"/>
</dbReference>
<dbReference type="NCBIfam" id="NF003829">
    <property type="entry name" value="PRK05417.1"/>
    <property type="match status" value="1"/>
</dbReference>
<dbReference type="PANTHER" id="PTHR33337:SF40">
    <property type="entry name" value="CENP-V_GFA DOMAIN-CONTAINING PROTEIN-RELATED"/>
    <property type="match status" value="1"/>
</dbReference>
<dbReference type="PANTHER" id="PTHR33337">
    <property type="entry name" value="GFA DOMAIN-CONTAINING PROTEIN"/>
    <property type="match status" value="1"/>
</dbReference>
<dbReference type="Pfam" id="PF04828">
    <property type="entry name" value="GFA"/>
    <property type="match status" value="1"/>
</dbReference>
<dbReference type="PIRSF" id="PIRSF033318">
    <property type="entry name" value="Formald_GSH"/>
    <property type="match status" value="1"/>
</dbReference>
<dbReference type="SUPFAM" id="SSF51316">
    <property type="entry name" value="Mss4-like"/>
    <property type="match status" value="1"/>
</dbReference>
<dbReference type="PROSITE" id="PS51891">
    <property type="entry name" value="CENP_V_GFA"/>
    <property type="match status" value="1"/>
</dbReference>
<feature type="chain" id="PRO_1000045842" description="Glutathione-dependent formaldehyde-activating enzyme">
    <location>
        <begin position="1"/>
        <end position="191"/>
    </location>
</feature>
<feature type="domain" description="CENP-V/GFA" evidence="2">
    <location>
        <begin position="22"/>
        <end position="169"/>
    </location>
</feature>
<feature type="binding site" evidence="1 2">
    <location>
        <position position="29"/>
    </location>
    <ligand>
        <name>Zn(2+)</name>
        <dbReference type="ChEBI" id="CHEBI:29105"/>
        <label>1</label>
        <note>structural</note>
    </ligand>
</feature>
<feature type="binding site" evidence="1 2">
    <location>
        <position position="31"/>
    </location>
    <ligand>
        <name>Zn(2+)</name>
        <dbReference type="ChEBI" id="CHEBI:29105"/>
        <label>1</label>
        <note>structural</note>
    </ligand>
</feature>
<feature type="binding site" evidence="1 2">
    <location>
        <position position="50"/>
    </location>
    <ligand>
        <name>Zn(2+)</name>
        <dbReference type="ChEBI" id="CHEBI:29105"/>
        <label>2</label>
        <note>catalytic</note>
    </ligand>
</feature>
<feature type="binding site" evidence="1 2">
    <location>
        <position position="52"/>
    </location>
    <ligand>
        <name>Zn(2+)</name>
        <dbReference type="ChEBI" id="CHEBI:29105"/>
        <label>2</label>
        <note>catalytic</note>
    </ligand>
</feature>
<feature type="binding site" evidence="1 2">
    <location>
        <position position="55"/>
    </location>
    <ligand>
        <name>Zn(2+)</name>
        <dbReference type="ChEBI" id="CHEBI:29105"/>
        <label>2</label>
        <note>catalytic</note>
    </ligand>
</feature>
<feature type="binding site" evidence="1 2">
    <location>
        <position position="97"/>
    </location>
    <ligand>
        <name>Zn(2+)</name>
        <dbReference type="ChEBI" id="CHEBI:29105"/>
        <label>1</label>
        <note>structural</note>
    </ligand>
</feature>
<feature type="binding site" evidence="1 2">
    <location>
        <position position="100"/>
    </location>
    <ligand>
        <name>Zn(2+)</name>
        <dbReference type="ChEBI" id="CHEBI:29105"/>
        <label>1</label>
        <note>structural</note>
    </ligand>
</feature>
<keyword id="KW-0456">Lyase</keyword>
<keyword id="KW-0479">Metal-binding</keyword>
<keyword id="KW-0862">Zinc</keyword>
<organism>
    <name type="scientific">Xanthomonas campestris pv. campestris (strain 8004)</name>
    <dbReference type="NCBI Taxonomy" id="314565"/>
    <lineage>
        <taxon>Bacteria</taxon>
        <taxon>Pseudomonadati</taxon>
        <taxon>Pseudomonadota</taxon>
        <taxon>Gammaproteobacteria</taxon>
        <taxon>Lysobacterales</taxon>
        <taxon>Lysobacteraceae</taxon>
        <taxon>Xanthomonas</taxon>
    </lineage>
</organism>
<sequence>MANVSIHPAVDGGVVHGSTEGFAGGTLQCLCASNKVTVDVASQSAHNHACGCSKCWKPEGAKFSVVAVAPRDKVTVTAHPEKLKIVDESATIQRHACTGCGVHLYGRIENKDHAFYGLDFIHTELSQQSGWSPPGFAAFVSSIIETGTPPDQMDGVRARLTELGLTPYDCLSPALMDALSTNVARHKGLLH</sequence>
<evidence type="ECO:0000255" key="1">
    <source>
        <dbReference type="HAMAP-Rule" id="MF_00723"/>
    </source>
</evidence>
<evidence type="ECO:0000255" key="2">
    <source>
        <dbReference type="PROSITE-ProRule" id="PRU01239"/>
    </source>
</evidence>
<gene>
    <name evidence="1" type="primary">gfa</name>
    <name type="ordered locus">XC_0776</name>
</gene>
<reference key="1">
    <citation type="journal article" date="2005" name="Genome Res.">
        <title>Comparative and functional genomic analyses of the pathogenicity of phytopathogen Xanthomonas campestris pv. campestris.</title>
        <authorList>
            <person name="Qian W."/>
            <person name="Jia Y."/>
            <person name="Ren S.-X."/>
            <person name="He Y.-Q."/>
            <person name="Feng J.-X."/>
            <person name="Lu L.-F."/>
            <person name="Sun Q."/>
            <person name="Ying G."/>
            <person name="Tang D.-J."/>
            <person name="Tang H."/>
            <person name="Wu W."/>
            <person name="Hao P."/>
            <person name="Wang L."/>
            <person name="Jiang B.-L."/>
            <person name="Zeng S."/>
            <person name="Gu W.-Y."/>
            <person name="Lu G."/>
            <person name="Rong L."/>
            <person name="Tian Y."/>
            <person name="Yao Z."/>
            <person name="Fu G."/>
            <person name="Chen B."/>
            <person name="Fang R."/>
            <person name="Qiang B."/>
            <person name="Chen Z."/>
            <person name="Zhao G.-P."/>
            <person name="Tang J.-L."/>
            <person name="He C."/>
        </authorList>
    </citation>
    <scope>NUCLEOTIDE SEQUENCE [LARGE SCALE GENOMIC DNA]</scope>
    <source>
        <strain>8004</strain>
    </source>
</reference>
<name>GFA_XANC8</name>
<accession>Q4UYL9</accession>
<comment type="function">
    <text evidence="1">Catalyzes the condensation of formaldehyde and glutathione to S-hydroxymethylglutathione.</text>
</comment>
<comment type="catalytic activity">
    <reaction evidence="1">
        <text>S-(hydroxymethyl)glutathione = glutathione + formaldehyde</text>
        <dbReference type="Rhea" id="RHEA:22488"/>
        <dbReference type="ChEBI" id="CHEBI:16842"/>
        <dbReference type="ChEBI" id="CHEBI:57925"/>
        <dbReference type="ChEBI" id="CHEBI:58758"/>
        <dbReference type="EC" id="4.4.1.22"/>
    </reaction>
</comment>
<comment type="cofactor">
    <cofactor evidence="1 2">
        <name>Zn(2+)</name>
        <dbReference type="ChEBI" id="CHEBI:29105"/>
    </cofactor>
    <text evidence="1 2">Binds 2 Zn(2+) ions per subunit.</text>
</comment>
<comment type="pathway">
    <text evidence="1">One-carbon metabolism; formaldehyde degradation; formate from formaldehyde (glutathione route): step 1/3.</text>
</comment>
<comment type="similarity">
    <text evidence="1">Belongs to the Gfa family.</text>
</comment>
<protein>
    <recommendedName>
        <fullName evidence="1">Glutathione-dependent formaldehyde-activating enzyme</fullName>
        <ecNumber evidence="1">4.4.1.22</ecNumber>
    </recommendedName>
    <alternativeName>
        <fullName evidence="1">S-(hydroxymethyl)glutathione synthase</fullName>
    </alternativeName>
</protein>
<proteinExistence type="inferred from homology"/>